<name>MURG_BRUA4</name>
<proteinExistence type="inferred from homology"/>
<evidence type="ECO:0000255" key="1">
    <source>
        <dbReference type="HAMAP-Rule" id="MF_00033"/>
    </source>
</evidence>
<keyword id="KW-0131">Cell cycle</keyword>
<keyword id="KW-0132">Cell division</keyword>
<keyword id="KW-0997">Cell inner membrane</keyword>
<keyword id="KW-1003">Cell membrane</keyword>
<keyword id="KW-0133">Cell shape</keyword>
<keyword id="KW-0961">Cell wall biogenesis/degradation</keyword>
<keyword id="KW-0328">Glycosyltransferase</keyword>
<keyword id="KW-0472">Membrane</keyword>
<keyword id="KW-0573">Peptidoglycan synthesis</keyword>
<keyword id="KW-1185">Reference proteome</keyword>
<keyword id="KW-0808">Transferase</keyword>
<comment type="function">
    <text evidence="1">Cell wall formation. Catalyzes the transfer of a GlcNAc subunit on undecaprenyl-pyrophosphoryl-MurNAc-pentapeptide (lipid intermediate I) to form undecaprenyl-pyrophosphoryl-MurNAc-(pentapeptide)GlcNAc (lipid intermediate II).</text>
</comment>
<comment type="catalytic activity">
    <reaction evidence="1">
        <text>di-trans,octa-cis-undecaprenyl diphospho-N-acetyl-alpha-D-muramoyl-L-alanyl-D-glutamyl-meso-2,6-diaminopimeloyl-D-alanyl-D-alanine + UDP-N-acetyl-alpha-D-glucosamine = di-trans,octa-cis-undecaprenyl diphospho-[N-acetyl-alpha-D-glucosaminyl-(1-&gt;4)]-N-acetyl-alpha-D-muramoyl-L-alanyl-D-glutamyl-meso-2,6-diaminopimeloyl-D-alanyl-D-alanine + UDP + H(+)</text>
        <dbReference type="Rhea" id="RHEA:31227"/>
        <dbReference type="ChEBI" id="CHEBI:15378"/>
        <dbReference type="ChEBI" id="CHEBI:57705"/>
        <dbReference type="ChEBI" id="CHEBI:58223"/>
        <dbReference type="ChEBI" id="CHEBI:61387"/>
        <dbReference type="ChEBI" id="CHEBI:61388"/>
        <dbReference type="EC" id="2.4.1.227"/>
    </reaction>
</comment>
<comment type="pathway">
    <text evidence="1">Cell wall biogenesis; peptidoglycan biosynthesis.</text>
</comment>
<comment type="subcellular location">
    <subcellularLocation>
        <location evidence="1">Cell inner membrane</location>
        <topology evidence="1">Peripheral membrane protein</topology>
        <orientation evidence="1">Cytoplasmic side</orientation>
    </subcellularLocation>
</comment>
<comment type="similarity">
    <text evidence="1">Belongs to the glycosyltransferase 28 family. MurG subfamily.</text>
</comment>
<organism>
    <name type="scientific">Brucella anthropi (strain ATCC 49188 / DSM 6882 / CCUG 24695 / JCM 21032 / LMG 3331 / NBRC 15819 / NCTC 12168 / Alc 37)</name>
    <name type="common">Ochrobactrum anthropi</name>
    <dbReference type="NCBI Taxonomy" id="439375"/>
    <lineage>
        <taxon>Bacteria</taxon>
        <taxon>Pseudomonadati</taxon>
        <taxon>Pseudomonadota</taxon>
        <taxon>Alphaproteobacteria</taxon>
        <taxon>Hyphomicrobiales</taxon>
        <taxon>Brucellaceae</taxon>
        <taxon>Brucella/Ochrobactrum group</taxon>
        <taxon>Brucella</taxon>
    </lineage>
</organism>
<reference key="1">
    <citation type="journal article" date="2011" name="J. Bacteriol.">
        <title>Genome of Ochrobactrum anthropi ATCC 49188 T, a versatile opportunistic pathogen and symbiont of several eukaryotic hosts.</title>
        <authorList>
            <person name="Chain P.S."/>
            <person name="Lang D.M."/>
            <person name="Comerci D.J."/>
            <person name="Malfatti S.A."/>
            <person name="Vergez L.M."/>
            <person name="Shin M."/>
            <person name="Ugalde R.A."/>
            <person name="Garcia E."/>
            <person name="Tolmasky M.E."/>
        </authorList>
    </citation>
    <scope>NUCLEOTIDE SEQUENCE [LARGE SCALE GENOMIC DNA]</scope>
    <source>
        <strain>ATCC 49188 / DSM 6882 / CCUG 24695 / JCM 21032 / LMG 3331 / NBRC 15819 / NCTC 12168 / Alc 37</strain>
    </source>
</reference>
<gene>
    <name evidence="1" type="primary">murG</name>
    <name type="ordered locus">Oant_1744</name>
</gene>
<accession>A6WZQ6</accession>
<sequence length="375" mass="39799">MVKGVIVLAAGGTGGHLFPAEALAHELKARGWDVHLATDARAQRFAGAFAEDHVHVIRSATIAGRNPIALLKTFWSLWQGNLDSRKLFRRLKPKLVAGFGGYPTLPPLYAASNMNIPTMVHEQNAVMGRANKGLAGRVKAIAGGFLPETGGVYAEKTVTTGNPVRPPVLAAAETSYKPVKADERFRLLVFGGSQGAQFFSTAIPAAVALLPDRDRARLLITQQARKEDEAAVREAYKKLGVPADVAPFFNDMPARMADAQFVISRSGASTVSEITVIGRPAMLVPFPHALDHDQAANAAALAAVGGGEVVRQSELSPERLAEILQAAMNEPQRLEAQAKAAKSVGKPDAARLLADLAEAIAAGKSVQEFKEGTRP</sequence>
<protein>
    <recommendedName>
        <fullName evidence="1">UDP-N-acetylglucosamine--N-acetylmuramyl-(pentapeptide) pyrophosphoryl-undecaprenol N-acetylglucosamine transferase</fullName>
        <ecNumber evidence="1">2.4.1.227</ecNumber>
    </recommendedName>
    <alternativeName>
        <fullName evidence="1">Undecaprenyl-PP-MurNAc-pentapeptide-UDPGlcNAc GlcNAc transferase</fullName>
    </alternativeName>
</protein>
<dbReference type="EC" id="2.4.1.227" evidence="1"/>
<dbReference type="EMBL" id="CP000758">
    <property type="protein sequence ID" value="ABS14460.1"/>
    <property type="molecule type" value="Genomic_DNA"/>
</dbReference>
<dbReference type="RefSeq" id="WP_012091748.1">
    <property type="nucleotide sequence ID" value="NC_009667.1"/>
</dbReference>
<dbReference type="SMR" id="A6WZQ6"/>
<dbReference type="STRING" id="439375.Oant_1744"/>
<dbReference type="CAZy" id="GT28">
    <property type="family name" value="Glycosyltransferase Family 28"/>
</dbReference>
<dbReference type="KEGG" id="oan:Oant_1744"/>
<dbReference type="PATRIC" id="fig|439375.7.peg.1845"/>
<dbReference type="eggNOG" id="COG0707">
    <property type="taxonomic scope" value="Bacteria"/>
</dbReference>
<dbReference type="HOGENOM" id="CLU_037404_2_1_5"/>
<dbReference type="PhylomeDB" id="A6WZQ6"/>
<dbReference type="UniPathway" id="UPA00219"/>
<dbReference type="Proteomes" id="UP000002301">
    <property type="component" value="Chromosome 1"/>
</dbReference>
<dbReference type="GO" id="GO:0005886">
    <property type="term" value="C:plasma membrane"/>
    <property type="evidence" value="ECO:0007669"/>
    <property type="project" value="UniProtKB-SubCell"/>
</dbReference>
<dbReference type="GO" id="GO:0051991">
    <property type="term" value="F:UDP-N-acetyl-D-glucosamine:N-acetylmuramoyl-L-alanyl-D-glutamyl-meso-2,6-diaminopimelyl-D-alanyl-D-alanine-diphosphoundecaprenol 4-beta-N-acetylglucosaminlytransferase activity"/>
    <property type="evidence" value="ECO:0007669"/>
    <property type="project" value="RHEA"/>
</dbReference>
<dbReference type="GO" id="GO:0050511">
    <property type="term" value="F:undecaprenyldiphospho-muramoylpentapeptide beta-N-acetylglucosaminyltransferase activity"/>
    <property type="evidence" value="ECO:0007669"/>
    <property type="project" value="UniProtKB-UniRule"/>
</dbReference>
<dbReference type="GO" id="GO:0005975">
    <property type="term" value="P:carbohydrate metabolic process"/>
    <property type="evidence" value="ECO:0007669"/>
    <property type="project" value="InterPro"/>
</dbReference>
<dbReference type="GO" id="GO:0051301">
    <property type="term" value="P:cell division"/>
    <property type="evidence" value="ECO:0007669"/>
    <property type="project" value="UniProtKB-KW"/>
</dbReference>
<dbReference type="GO" id="GO:0071555">
    <property type="term" value="P:cell wall organization"/>
    <property type="evidence" value="ECO:0007669"/>
    <property type="project" value="UniProtKB-KW"/>
</dbReference>
<dbReference type="GO" id="GO:0030259">
    <property type="term" value="P:lipid glycosylation"/>
    <property type="evidence" value="ECO:0007669"/>
    <property type="project" value="UniProtKB-UniRule"/>
</dbReference>
<dbReference type="GO" id="GO:0009252">
    <property type="term" value="P:peptidoglycan biosynthetic process"/>
    <property type="evidence" value="ECO:0007669"/>
    <property type="project" value="UniProtKB-UniRule"/>
</dbReference>
<dbReference type="GO" id="GO:0008360">
    <property type="term" value="P:regulation of cell shape"/>
    <property type="evidence" value="ECO:0007669"/>
    <property type="project" value="UniProtKB-KW"/>
</dbReference>
<dbReference type="CDD" id="cd03785">
    <property type="entry name" value="GT28_MurG"/>
    <property type="match status" value="1"/>
</dbReference>
<dbReference type="Gene3D" id="3.40.50.2000">
    <property type="entry name" value="Glycogen Phosphorylase B"/>
    <property type="match status" value="2"/>
</dbReference>
<dbReference type="HAMAP" id="MF_00033">
    <property type="entry name" value="MurG"/>
    <property type="match status" value="1"/>
</dbReference>
<dbReference type="InterPro" id="IPR006009">
    <property type="entry name" value="GlcNAc_MurG"/>
</dbReference>
<dbReference type="InterPro" id="IPR007235">
    <property type="entry name" value="Glyco_trans_28_C"/>
</dbReference>
<dbReference type="InterPro" id="IPR004276">
    <property type="entry name" value="GlycoTrans_28_N"/>
</dbReference>
<dbReference type="NCBIfam" id="TIGR01133">
    <property type="entry name" value="murG"/>
    <property type="match status" value="1"/>
</dbReference>
<dbReference type="PANTHER" id="PTHR21015:SF22">
    <property type="entry name" value="GLYCOSYLTRANSFERASE"/>
    <property type="match status" value="1"/>
</dbReference>
<dbReference type="PANTHER" id="PTHR21015">
    <property type="entry name" value="UDP-N-ACETYLGLUCOSAMINE--N-ACETYLMURAMYL-(PENTAPEPTIDE) PYROPHOSPHORYL-UNDECAPRENOL N-ACETYLGLUCOSAMINE TRANSFERASE 1"/>
    <property type="match status" value="1"/>
</dbReference>
<dbReference type="Pfam" id="PF04101">
    <property type="entry name" value="Glyco_tran_28_C"/>
    <property type="match status" value="1"/>
</dbReference>
<dbReference type="Pfam" id="PF03033">
    <property type="entry name" value="Glyco_transf_28"/>
    <property type="match status" value="1"/>
</dbReference>
<dbReference type="SUPFAM" id="SSF53756">
    <property type="entry name" value="UDP-Glycosyltransferase/glycogen phosphorylase"/>
    <property type="match status" value="1"/>
</dbReference>
<feature type="chain" id="PRO_0000315130" description="UDP-N-acetylglucosamine--N-acetylmuramyl-(pentapeptide) pyrophosphoryl-undecaprenol N-acetylglucosamine transferase">
    <location>
        <begin position="1"/>
        <end position="375"/>
    </location>
</feature>
<feature type="binding site" evidence="1">
    <location>
        <begin position="13"/>
        <end position="15"/>
    </location>
    <ligand>
        <name>UDP-N-acetyl-alpha-D-glucosamine</name>
        <dbReference type="ChEBI" id="CHEBI:57705"/>
    </ligand>
</feature>
<feature type="binding site" evidence="1">
    <location>
        <position position="124"/>
    </location>
    <ligand>
        <name>UDP-N-acetyl-alpha-D-glucosamine</name>
        <dbReference type="ChEBI" id="CHEBI:57705"/>
    </ligand>
</feature>
<feature type="binding site" evidence="1">
    <location>
        <position position="165"/>
    </location>
    <ligand>
        <name>UDP-N-acetyl-alpha-D-glucosamine</name>
        <dbReference type="ChEBI" id="CHEBI:57705"/>
    </ligand>
</feature>
<feature type="binding site" evidence="1">
    <location>
        <position position="193"/>
    </location>
    <ligand>
        <name>UDP-N-acetyl-alpha-D-glucosamine</name>
        <dbReference type="ChEBI" id="CHEBI:57705"/>
    </ligand>
</feature>
<feature type="binding site" evidence="1">
    <location>
        <position position="294"/>
    </location>
    <ligand>
        <name>UDP-N-acetyl-alpha-D-glucosamine</name>
        <dbReference type="ChEBI" id="CHEBI:57705"/>
    </ligand>
</feature>